<name>NU4C_HUPLU</name>
<feature type="chain" id="PRO_0000118015" description="NAD(P)H-quinone oxidoreductase chain 4, chloroplastic">
    <location>
        <begin position="1"/>
        <end position="502"/>
    </location>
</feature>
<feature type="transmembrane region" description="Helical" evidence="2">
    <location>
        <begin position="4"/>
        <end position="24"/>
    </location>
</feature>
<feature type="transmembrane region" description="Helical" evidence="2">
    <location>
        <begin position="39"/>
        <end position="59"/>
    </location>
</feature>
<feature type="transmembrane region" description="Helical" evidence="2">
    <location>
        <begin position="89"/>
        <end position="109"/>
    </location>
</feature>
<feature type="transmembrane region" description="Helical" evidence="2">
    <location>
        <begin position="115"/>
        <end position="132"/>
    </location>
</feature>
<feature type="transmembrane region" description="Helical" evidence="2">
    <location>
        <begin position="136"/>
        <end position="156"/>
    </location>
</feature>
<feature type="transmembrane region" description="Helical" evidence="2">
    <location>
        <begin position="169"/>
        <end position="189"/>
    </location>
</feature>
<feature type="transmembrane region" description="Helical" evidence="2">
    <location>
        <begin position="209"/>
        <end position="229"/>
    </location>
</feature>
<feature type="transmembrane region" description="Helical" evidence="2">
    <location>
        <begin position="244"/>
        <end position="264"/>
    </location>
</feature>
<feature type="transmembrane region" description="Helical" evidence="2">
    <location>
        <begin position="276"/>
        <end position="296"/>
    </location>
</feature>
<feature type="transmembrane region" description="Helical" evidence="2">
    <location>
        <begin position="315"/>
        <end position="335"/>
    </location>
</feature>
<feature type="transmembrane region" description="Helical" evidence="2">
    <location>
        <begin position="387"/>
        <end position="407"/>
    </location>
</feature>
<feature type="transmembrane region" description="Helical" evidence="2">
    <location>
        <begin position="418"/>
        <end position="438"/>
    </location>
</feature>
<feature type="transmembrane region" description="Helical" evidence="2">
    <location>
        <begin position="466"/>
        <end position="486"/>
    </location>
</feature>
<geneLocation type="chloroplast"/>
<accession>Q5SCZ6</accession>
<keyword id="KW-0150">Chloroplast</keyword>
<keyword id="KW-0472">Membrane</keyword>
<keyword id="KW-0520">NAD</keyword>
<keyword id="KW-0521">NADP</keyword>
<keyword id="KW-0934">Plastid</keyword>
<keyword id="KW-0618">Plastoquinone</keyword>
<keyword id="KW-0874">Quinone</keyword>
<keyword id="KW-0691">RNA editing</keyword>
<keyword id="KW-0793">Thylakoid</keyword>
<keyword id="KW-1278">Translocase</keyword>
<keyword id="KW-0812">Transmembrane</keyword>
<keyword id="KW-1133">Transmembrane helix</keyword>
<gene>
    <name evidence="2" type="primary">ndhD</name>
</gene>
<proteinExistence type="inferred from homology"/>
<sequence>MSNYPWLTIIVLLPIPAGLLIPLLPSPNGGNKIIRWYTLGICLLEFLLITHTFCYHFDIDNPFIQLREDYNWINIIDFHWRLGIDGFSIGLTPLTGFVTTLATLAAWPVTRSPRLFHSSMLAMYSGQVGLFTSQDILLFFLMWELELIPVYLLLSMWGGKRRLYAATKFILYTAGGSIPLLIGALTMGLHGFDEPTLDFQNLANRSYPIALEIVLYLSFFVAYAVKLPIFPLHTWLPDTHGEAHYSTCMLLAGILLKMGGYGLIRINMELLPHAHSIFAPWLVIVGAFQIVYAASISSSQRNSKRRIAYSSISHMGFVLIGIGSATNIGLNGAILQMISHGLIGAAPFSLAGTSYDRTRTPFLDQMGGIGTSMPKTFTMFSSFSMASLALPGTSGFAAESMVFPGIVSGKNYSLPFKIIITIVEAIGIILTPIYLLSMLRQMFYGYFNKVSNLSISHAMDSGPREIFISICLLLPTIGIGLYPNLILSLCNSKVEFILSHNF</sequence>
<organism>
    <name type="scientific">Huperzia lucidula</name>
    <name type="common">Shining clubmoss</name>
    <name type="synonym">Lycopodium lucidulum</name>
    <dbReference type="NCBI Taxonomy" id="37429"/>
    <lineage>
        <taxon>Eukaryota</taxon>
        <taxon>Viridiplantae</taxon>
        <taxon>Streptophyta</taxon>
        <taxon>Embryophyta</taxon>
        <taxon>Tracheophyta</taxon>
        <taxon>Lycopodiopsida</taxon>
        <taxon>Lycopodiales</taxon>
        <taxon>Lycopodiaceae</taxon>
        <taxon>Huperzioideae</taxon>
        <taxon>Huperzia</taxon>
    </lineage>
</organism>
<evidence type="ECO:0000250" key="1"/>
<evidence type="ECO:0000255" key="2">
    <source>
        <dbReference type="HAMAP-Rule" id="MF_00491"/>
    </source>
</evidence>
<reference key="1">
    <citation type="journal article" date="2005" name="Gene">
        <title>The first complete chloroplast genome sequence of a lycophyte, Huperzia lucidula (Lycopodiaceae).</title>
        <authorList>
            <person name="Wolf P.G."/>
            <person name="Karol K.G."/>
            <person name="Mandoli D.F."/>
            <person name="Kuehl J.V."/>
            <person name="Arumuganathan K."/>
            <person name="Ellis M.W."/>
            <person name="Mishler B.D."/>
            <person name="Kelch D.G."/>
            <person name="Olmstead R.G."/>
            <person name="Boore J.L."/>
        </authorList>
    </citation>
    <scope>NUCLEOTIDE SEQUENCE [LARGE SCALE GENOMIC DNA]</scope>
</reference>
<dbReference type="EC" id="7.1.1.-" evidence="2"/>
<dbReference type="EMBL" id="AY660566">
    <property type="protein sequence ID" value="AAT80763.1"/>
    <property type="molecule type" value="Genomic_DNA"/>
</dbReference>
<dbReference type="RefSeq" id="YP_209567.2">
    <property type="nucleotide sequence ID" value="NC_006861.1"/>
</dbReference>
<dbReference type="SMR" id="Q5SCZ6"/>
<dbReference type="GeneID" id="3283829"/>
<dbReference type="GO" id="GO:0009535">
    <property type="term" value="C:chloroplast thylakoid membrane"/>
    <property type="evidence" value="ECO:0007669"/>
    <property type="project" value="UniProtKB-SubCell"/>
</dbReference>
<dbReference type="GO" id="GO:0008137">
    <property type="term" value="F:NADH dehydrogenase (ubiquinone) activity"/>
    <property type="evidence" value="ECO:0007669"/>
    <property type="project" value="InterPro"/>
</dbReference>
<dbReference type="GO" id="GO:0048039">
    <property type="term" value="F:ubiquinone binding"/>
    <property type="evidence" value="ECO:0007669"/>
    <property type="project" value="TreeGrafter"/>
</dbReference>
<dbReference type="GO" id="GO:0042773">
    <property type="term" value="P:ATP synthesis coupled electron transport"/>
    <property type="evidence" value="ECO:0007669"/>
    <property type="project" value="InterPro"/>
</dbReference>
<dbReference type="GO" id="GO:0015990">
    <property type="term" value="P:electron transport coupled proton transport"/>
    <property type="evidence" value="ECO:0007669"/>
    <property type="project" value="TreeGrafter"/>
</dbReference>
<dbReference type="HAMAP" id="MF_00491">
    <property type="entry name" value="NDH1_NuoM"/>
    <property type="match status" value="1"/>
</dbReference>
<dbReference type="InterPro" id="IPR022997">
    <property type="entry name" value="NADH_Q_OxRdtase_chain4"/>
</dbReference>
<dbReference type="InterPro" id="IPR010227">
    <property type="entry name" value="NADH_Q_OxRdtase_chainM/4"/>
</dbReference>
<dbReference type="InterPro" id="IPR003918">
    <property type="entry name" value="NADH_UbQ_OxRdtase"/>
</dbReference>
<dbReference type="InterPro" id="IPR001750">
    <property type="entry name" value="ND/Mrp_TM"/>
</dbReference>
<dbReference type="NCBIfam" id="TIGR01972">
    <property type="entry name" value="NDH_I_M"/>
    <property type="match status" value="1"/>
</dbReference>
<dbReference type="NCBIfam" id="NF009212">
    <property type="entry name" value="PRK12561.1"/>
    <property type="match status" value="1"/>
</dbReference>
<dbReference type="PANTHER" id="PTHR43507:SF21">
    <property type="entry name" value="NAD(P)H-QUINONE OXIDOREDUCTASE CHAIN 4, CHLOROPLASTIC"/>
    <property type="match status" value="1"/>
</dbReference>
<dbReference type="PANTHER" id="PTHR43507">
    <property type="entry name" value="NADH-UBIQUINONE OXIDOREDUCTASE CHAIN 4"/>
    <property type="match status" value="1"/>
</dbReference>
<dbReference type="Pfam" id="PF00361">
    <property type="entry name" value="Proton_antipo_M"/>
    <property type="match status" value="1"/>
</dbReference>
<dbReference type="PRINTS" id="PR01437">
    <property type="entry name" value="NUOXDRDTASE4"/>
</dbReference>
<comment type="catalytic activity">
    <reaction evidence="2">
        <text>a plastoquinone + NADH + (n+1) H(+)(in) = a plastoquinol + NAD(+) + n H(+)(out)</text>
        <dbReference type="Rhea" id="RHEA:42608"/>
        <dbReference type="Rhea" id="RHEA-COMP:9561"/>
        <dbReference type="Rhea" id="RHEA-COMP:9562"/>
        <dbReference type="ChEBI" id="CHEBI:15378"/>
        <dbReference type="ChEBI" id="CHEBI:17757"/>
        <dbReference type="ChEBI" id="CHEBI:57540"/>
        <dbReference type="ChEBI" id="CHEBI:57945"/>
        <dbReference type="ChEBI" id="CHEBI:62192"/>
    </reaction>
</comment>
<comment type="catalytic activity">
    <reaction evidence="2">
        <text>a plastoquinone + NADPH + (n+1) H(+)(in) = a plastoquinol + NADP(+) + n H(+)(out)</text>
        <dbReference type="Rhea" id="RHEA:42612"/>
        <dbReference type="Rhea" id="RHEA-COMP:9561"/>
        <dbReference type="Rhea" id="RHEA-COMP:9562"/>
        <dbReference type="ChEBI" id="CHEBI:15378"/>
        <dbReference type="ChEBI" id="CHEBI:17757"/>
        <dbReference type="ChEBI" id="CHEBI:57783"/>
        <dbReference type="ChEBI" id="CHEBI:58349"/>
        <dbReference type="ChEBI" id="CHEBI:62192"/>
    </reaction>
</comment>
<comment type="subcellular location">
    <subcellularLocation>
        <location evidence="2">Plastid</location>
        <location evidence="2">Chloroplast thylakoid membrane</location>
        <topology evidence="2">Multi-pass membrane protein</topology>
    </subcellularLocation>
</comment>
<comment type="RNA editing">
    <location>
        <position position="1" evidence="1"/>
    </location>
    <text evidence="1">The initiator methionine is created by RNA editing.</text>
</comment>
<comment type="similarity">
    <text evidence="2">Belongs to the complex I subunit 4 family.</text>
</comment>
<protein>
    <recommendedName>
        <fullName evidence="2">NAD(P)H-quinone oxidoreductase chain 4, chloroplastic</fullName>
        <ecNumber evidence="2">7.1.1.-</ecNumber>
    </recommendedName>
    <alternativeName>
        <fullName evidence="2">NAD(P)H dehydrogenase, chain 4</fullName>
    </alternativeName>
    <alternativeName>
        <fullName evidence="2">NADH-plastoquinone oxidoreductase chain 4</fullName>
    </alternativeName>
</protein>